<name>HCP_SALDC</name>
<reference key="1">
    <citation type="journal article" date="2011" name="J. Bacteriol.">
        <title>Comparative genomics of 28 Salmonella enterica isolates: evidence for CRISPR-mediated adaptive sublineage evolution.</title>
        <authorList>
            <person name="Fricke W.F."/>
            <person name="Mammel M.K."/>
            <person name="McDermott P.F."/>
            <person name="Tartera C."/>
            <person name="White D.G."/>
            <person name="Leclerc J.E."/>
            <person name="Ravel J."/>
            <person name="Cebula T.A."/>
        </authorList>
    </citation>
    <scope>NUCLEOTIDE SEQUENCE [LARGE SCALE GENOMIC DNA]</scope>
    <source>
        <strain>CT_02021853</strain>
    </source>
</reference>
<feature type="chain" id="PRO_1000092345" description="Hydroxylamine reductase">
    <location>
        <begin position="1"/>
        <end position="550"/>
    </location>
</feature>
<feature type="binding site" evidence="1">
    <location>
        <position position="3"/>
    </location>
    <ligand>
        <name>[2Fe-2S] cluster</name>
        <dbReference type="ChEBI" id="CHEBI:190135"/>
    </ligand>
</feature>
<feature type="binding site" evidence="1">
    <location>
        <position position="6"/>
    </location>
    <ligand>
        <name>[2Fe-2S] cluster</name>
        <dbReference type="ChEBI" id="CHEBI:190135"/>
    </ligand>
</feature>
<feature type="binding site" evidence="1">
    <location>
        <position position="18"/>
    </location>
    <ligand>
        <name>[2Fe-2S] cluster</name>
        <dbReference type="ChEBI" id="CHEBI:190135"/>
    </ligand>
</feature>
<feature type="binding site" evidence="1">
    <location>
        <position position="25"/>
    </location>
    <ligand>
        <name>[2Fe-2S] cluster</name>
        <dbReference type="ChEBI" id="CHEBI:190135"/>
    </ligand>
</feature>
<feature type="binding site" evidence="1">
    <location>
        <position position="249"/>
    </location>
    <ligand>
        <name>hybrid [4Fe-2O-2S] cluster</name>
        <dbReference type="ChEBI" id="CHEBI:60519"/>
    </ligand>
</feature>
<feature type="binding site" evidence="1">
    <location>
        <position position="273"/>
    </location>
    <ligand>
        <name>hybrid [4Fe-2O-2S] cluster</name>
        <dbReference type="ChEBI" id="CHEBI:60519"/>
    </ligand>
</feature>
<feature type="binding site" evidence="1">
    <location>
        <position position="317"/>
    </location>
    <ligand>
        <name>hybrid [4Fe-2O-2S] cluster</name>
        <dbReference type="ChEBI" id="CHEBI:60519"/>
    </ligand>
</feature>
<feature type="binding site" description="via persulfide group" evidence="1">
    <location>
        <position position="405"/>
    </location>
    <ligand>
        <name>hybrid [4Fe-2O-2S] cluster</name>
        <dbReference type="ChEBI" id="CHEBI:60519"/>
    </ligand>
</feature>
<feature type="binding site" evidence="1">
    <location>
        <position position="433"/>
    </location>
    <ligand>
        <name>hybrid [4Fe-2O-2S] cluster</name>
        <dbReference type="ChEBI" id="CHEBI:60519"/>
    </ligand>
</feature>
<feature type="binding site" evidence="1">
    <location>
        <position position="458"/>
    </location>
    <ligand>
        <name>hybrid [4Fe-2O-2S] cluster</name>
        <dbReference type="ChEBI" id="CHEBI:60519"/>
    </ligand>
</feature>
<feature type="binding site" evidence="1">
    <location>
        <position position="492"/>
    </location>
    <ligand>
        <name>hybrid [4Fe-2O-2S] cluster</name>
        <dbReference type="ChEBI" id="CHEBI:60519"/>
    </ligand>
</feature>
<feature type="binding site" evidence="1">
    <location>
        <position position="494"/>
    </location>
    <ligand>
        <name>hybrid [4Fe-2O-2S] cluster</name>
        <dbReference type="ChEBI" id="CHEBI:60519"/>
    </ligand>
</feature>
<feature type="modified residue" description="Cysteine persulfide" evidence="1">
    <location>
        <position position="405"/>
    </location>
</feature>
<keyword id="KW-0001">2Fe-2S</keyword>
<keyword id="KW-0963">Cytoplasm</keyword>
<keyword id="KW-0408">Iron</keyword>
<keyword id="KW-0411">Iron-sulfur</keyword>
<keyword id="KW-0479">Metal-binding</keyword>
<keyword id="KW-0560">Oxidoreductase</keyword>
<dbReference type="EC" id="1.7.99.1" evidence="1"/>
<dbReference type="EMBL" id="CP001144">
    <property type="protein sequence ID" value="ACH77095.1"/>
    <property type="molecule type" value="Genomic_DNA"/>
</dbReference>
<dbReference type="RefSeq" id="WP_000458788.1">
    <property type="nucleotide sequence ID" value="NC_011205.1"/>
</dbReference>
<dbReference type="SMR" id="B5FQ13"/>
<dbReference type="KEGG" id="sed:SeD_A1004"/>
<dbReference type="HOGENOM" id="CLU_038344_2_0_6"/>
<dbReference type="Proteomes" id="UP000008322">
    <property type="component" value="Chromosome"/>
</dbReference>
<dbReference type="GO" id="GO:0005737">
    <property type="term" value="C:cytoplasm"/>
    <property type="evidence" value="ECO:0007669"/>
    <property type="project" value="UniProtKB-SubCell"/>
</dbReference>
<dbReference type="GO" id="GO:0051537">
    <property type="term" value="F:2 iron, 2 sulfur cluster binding"/>
    <property type="evidence" value="ECO:0007669"/>
    <property type="project" value="UniProtKB-KW"/>
</dbReference>
<dbReference type="GO" id="GO:0050418">
    <property type="term" value="F:hydroxylamine reductase activity"/>
    <property type="evidence" value="ECO:0007669"/>
    <property type="project" value="UniProtKB-UniRule"/>
</dbReference>
<dbReference type="GO" id="GO:0046872">
    <property type="term" value="F:metal ion binding"/>
    <property type="evidence" value="ECO:0007669"/>
    <property type="project" value="UniProtKB-KW"/>
</dbReference>
<dbReference type="GO" id="GO:0004601">
    <property type="term" value="F:peroxidase activity"/>
    <property type="evidence" value="ECO:0007669"/>
    <property type="project" value="TreeGrafter"/>
</dbReference>
<dbReference type="GO" id="GO:0042542">
    <property type="term" value="P:response to hydrogen peroxide"/>
    <property type="evidence" value="ECO:0007669"/>
    <property type="project" value="TreeGrafter"/>
</dbReference>
<dbReference type="CDD" id="cd01914">
    <property type="entry name" value="HCP"/>
    <property type="match status" value="1"/>
</dbReference>
<dbReference type="FunFam" id="1.20.1270.20:FF:000001">
    <property type="entry name" value="Hydroxylamine reductase"/>
    <property type="match status" value="1"/>
</dbReference>
<dbReference type="FunFam" id="1.20.1270.20:FF:000002">
    <property type="entry name" value="Hydroxylamine reductase"/>
    <property type="match status" value="1"/>
</dbReference>
<dbReference type="FunFam" id="3.40.50.2030:FF:000001">
    <property type="entry name" value="Hydroxylamine reductase"/>
    <property type="match status" value="1"/>
</dbReference>
<dbReference type="FunFam" id="3.40.50.2030:FF:000002">
    <property type="entry name" value="Hydroxylamine reductase"/>
    <property type="match status" value="1"/>
</dbReference>
<dbReference type="Gene3D" id="1.20.1270.20">
    <property type="match status" value="2"/>
</dbReference>
<dbReference type="Gene3D" id="3.40.50.2030">
    <property type="match status" value="2"/>
</dbReference>
<dbReference type="HAMAP" id="MF_00069">
    <property type="entry name" value="Hydroxylam_reduct"/>
    <property type="match status" value="1"/>
</dbReference>
<dbReference type="InterPro" id="IPR004137">
    <property type="entry name" value="HCP/CODH"/>
</dbReference>
<dbReference type="InterPro" id="IPR010048">
    <property type="entry name" value="Hydroxylam_reduct"/>
</dbReference>
<dbReference type="InterPro" id="IPR016099">
    <property type="entry name" value="Prismane-like_a/b-sand"/>
</dbReference>
<dbReference type="InterPro" id="IPR011254">
    <property type="entry name" value="Prismane-like_sf"/>
</dbReference>
<dbReference type="InterPro" id="IPR016100">
    <property type="entry name" value="Prismane_a-bundle"/>
</dbReference>
<dbReference type="NCBIfam" id="TIGR01703">
    <property type="entry name" value="hybrid_clust"/>
    <property type="match status" value="1"/>
</dbReference>
<dbReference type="NCBIfam" id="NF003658">
    <property type="entry name" value="PRK05290.1"/>
    <property type="match status" value="1"/>
</dbReference>
<dbReference type="PANTHER" id="PTHR30109">
    <property type="entry name" value="HYDROXYLAMINE REDUCTASE"/>
    <property type="match status" value="1"/>
</dbReference>
<dbReference type="PANTHER" id="PTHR30109:SF0">
    <property type="entry name" value="HYDROXYLAMINE REDUCTASE"/>
    <property type="match status" value="1"/>
</dbReference>
<dbReference type="Pfam" id="PF03063">
    <property type="entry name" value="Prismane"/>
    <property type="match status" value="1"/>
</dbReference>
<dbReference type="PIRSF" id="PIRSF000076">
    <property type="entry name" value="HCP"/>
    <property type="match status" value="1"/>
</dbReference>
<dbReference type="SUPFAM" id="SSF56821">
    <property type="entry name" value="Prismane protein-like"/>
    <property type="match status" value="1"/>
</dbReference>
<accession>B5FQ13</accession>
<organism>
    <name type="scientific">Salmonella dublin (strain CT_02021853)</name>
    <dbReference type="NCBI Taxonomy" id="439851"/>
    <lineage>
        <taxon>Bacteria</taxon>
        <taxon>Pseudomonadati</taxon>
        <taxon>Pseudomonadota</taxon>
        <taxon>Gammaproteobacteria</taxon>
        <taxon>Enterobacterales</taxon>
        <taxon>Enterobacteriaceae</taxon>
        <taxon>Salmonella</taxon>
    </lineage>
</organism>
<comment type="function">
    <text evidence="1">Catalyzes the reduction of hydroxylamine to form NH(3) and H(2)O.</text>
</comment>
<comment type="catalytic activity">
    <reaction evidence="1">
        <text>A + NH4(+) + H2O = hydroxylamine + AH2 + H(+)</text>
        <dbReference type="Rhea" id="RHEA:22052"/>
        <dbReference type="ChEBI" id="CHEBI:13193"/>
        <dbReference type="ChEBI" id="CHEBI:15377"/>
        <dbReference type="ChEBI" id="CHEBI:15378"/>
        <dbReference type="ChEBI" id="CHEBI:15429"/>
        <dbReference type="ChEBI" id="CHEBI:17499"/>
        <dbReference type="ChEBI" id="CHEBI:28938"/>
        <dbReference type="EC" id="1.7.99.1"/>
    </reaction>
</comment>
<comment type="cofactor">
    <cofactor evidence="1">
        <name>[2Fe-2S] cluster</name>
        <dbReference type="ChEBI" id="CHEBI:190135"/>
    </cofactor>
    <text evidence="1">Binds 1 [2Fe-2S] cluster.</text>
</comment>
<comment type="cofactor">
    <cofactor evidence="1">
        <name>hybrid [4Fe-2O-2S] cluster</name>
        <dbReference type="ChEBI" id="CHEBI:60519"/>
    </cofactor>
    <text evidence="1">Binds 1 hybrid [4Fe-2O-2S] cluster.</text>
</comment>
<comment type="subcellular location">
    <subcellularLocation>
        <location evidence="1">Cytoplasm</location>
    </subcellularLocation>
</comment>
<comment type="similarity">
    <text evidence="1">Belongs to the HCP family.</text>
</comment>
<protein>
    <recommendedName>
        <fullName evidence="1">Hydroxylamine reductase</fullName>
        <ecNumber evidence="1">1.7.99.1</ecNumber>
    </recommendedName>
    <alternativeName>
        <fullName evidence="1">Hybrid-cluster protein</fullName>
        <shortName evidence="1">HCP</shortName>
    </alternativeName>
    <alternativeName>
        <fullName evidence="1">Prismane protein</fullName>
    </alternativeName>
</protein>
<proteinExistence type="inferred from homology"/>
<evidence type="ECO:0000255" key="1">
    <source>
        <dbReference type="HAMAP-Rule" id="MF_00069"/>
    </source>
</evidence>
<sequence>MFCVQCEQTIRTPAGNGCSYAQGMCGKTAETSDLQDLLIAALQGLSAWAVKAREYGIINHDVDNFAPRAFFSTLTNVNFDSPRIVGYAREAIALREALKAQCLSVDANAHCDNPMADLQLVSDDLGELQRQAAEFTPNKDKAAIGENILGLRLLCLYGLKGAAAYMEHAHVLGQYDNDIYAQYHKIMAWLGTWPADMNALLECAMEIGQMNFKVMSILDAGETTKYGHPTPTQVNVKATEGKCILISGHDLKDLYNLLEQTEGTGVNVYTHGEMLPAHGYPELRKFKHLVGNYGSGWQNQQVEFARFPGPIVMTSNCIIDPTVGSYDDRIWTRSIVGWPGVSHLEGDDFGPVIAQAQQMAGFPYSEIPHLITVGFGRQTLLGTADTLIDLVSREKLRHIFLVGGCDGARGERNYFTDFATSVPDDCLILTLACGKYRFNKLEFGDIEGLPRLVDAGQCNDAYSAIILAVTLAEKLGCGVNDLPLSLVLSWFEQKAIVILLTLLSLGVKNIVTGPTAPGFFTPDLLAILNEKFGLRSVTTVEEDMKQLLSA</sequence>
<gene>
    <name evidence="1" type="primary">hcp</name>
    <name type="ordered locus">SeD_A1004</name>
</gene>